<comment type="function">
    <text evidence="1">Required for maturation of ribosomal RNAs and formation of the large ribosomal subunit.</text>
</comment>
<comment type="subcellular location">
    <subcellularLocation>
        <location evidence="1">Nucleus</location>
        <location evidence="1">Nucleolus</location>
    </subcellularLocation>
    <subcellularLocation>
        <location evidence="1">Nucleus</location>
        <location evidence="1">Nucleoplasm</location>
    </subcellularLocation>
</comment>
<comment type="similarity">
    <text evidence="1">Belongs to the pescadillo family.</text>
</comment>
<protein>
    <recommendedName>
        <fullName evidence="1">Pescadillo homolog</fullName>
    </recommendedName>
</protein>
<keyword id="KW-0175">Coiled coil</keyword>
<keyword id="KW-0539">Nucleus</keyword>
<keyword id="KW-1185">Reference proteome</keyword>
<keyword id="KW-0690">Ribosome biogenesis</keyword>
<keyword id="KW-0698">rRNA processing</keyword>
<organism>
    <name type="scientific">Leishmania braziliensis</name>
    <dbReference type="NCBI Taxonomy" id="5660"/>
    <lineage>
        <taxon>Eukaryota</taxon>
        <taxon>Discoba</taxon>
        <taxon>Euglenozoa</taxon>
        <taxon>Kinetoplastea</taxon>
        <taxon>Metakinetoplastina</taxon>
        <taxon>Trypanosomatida</taxon>
        <taxon>Trypanosomatidae</taxon>
        <taxon>Leishmaniinae</taxon>
        <taxon>Leishmania</taxon>
        <taxon>Leishmania braziliensis species complex</taxon>
    </lineage>
</organism>
<accession>A4H3Z2</accession>
<name>PESC_LEIBR</name>
<dbReference type="EMBL" id="FR798978">
    <property type="protein sequence ID" value="CAM41555.1"/>
    <property type="molecule type" value="Genomic_DNA"/>
</dbReference>
<dbReference type="RefSeq" id="XP_001561761.1">
    <property type="nucleotide sequence ID" value="XM_001561711.1"/>
</dbReference>
<dbReference type="SMR" id="A4H3Z2"/>
<dbReference type="FunCoup" id="A4H3Z2">
    <property type="interactions" value="490"/>
</dbReference>
<dbReference type="STRING" id="5660.A4H3Z2"/>
<dbReference type="GeneID" id="5412680"/>
<dbReference type="KEGG" id="lbz:LBRM_04_0780"/>
<dbReference type="VEuPathDB" id="TriTrypDB:LbrM.04.0780"/>
<dbReference type="InParanoid" id="A4H3Z2"/>
<dbReference type="OMA" id="QKVTWIV"/>
<dbReference type="Proteomes" id="UP000007258">
    <property type="component" value="Chromosome 4"/>
</dbReference>
<dbReference type="GO" id="GO:0005654">
    <property type="term" value="C:nucleoplasm"/>
    <property type="evidence" value="ECO:0007669"/>
    <property type="project" value="UniProtKB-SubCell"/>
</dbReference>
<dbReference type="GO" id="GO:0070545">
    <property type="term" value="C:PeBoW complex"/>
    <property type="evidence" value="ECO:0007669"/>
    <property type="project" value="TreeGrafter"/>
</dbReference>
<dbReference type="GO" id="GO:0030687">
    <property type="term" value="C:preribosome, large subunit precursor"/>
    <property type="evidence" value="ECO:0007669"/>
    <property type="project" value="UniProtKB-UniRule"/>
</dbReference>
<dbReference type="GO" id="GO:0043021">
    <property type="term" value="F:ribonucleoprotein complex binding"/>
    <property type="evidence" value="ECO:0007669"/>
    <property type="project" value="UniProtKB-UniRule"/>
</dbReference>
<dbReference type="GO" id="GO:0003723">
    <property type="term" value="F:RNA binding"/>
    <property type="evidence" value="ECO:0007669"/>
    <property type="project" value="TreeGrafter"/>
</dbReference>
<dbReference type="GO" id="GO:0000466">
    <property type="term" value="P:maturation of 5.8S rRNA from tricistronic rRNA transcript (SSU-rRNA, 5.8S rRNA, LSU-rRNA)"/>
    <property type="evidence" value="ECO:0007669"/>
    <property type="project" value="UniProtKB-UniRule"/>
</dbReference>
<dbReference type="GO" id="GO:0000463">
    <property type="term" value="P:maturation of LSU-rRNA from tricistronic rRNA transcript (SSU-rRNA, 5.8S rRNA, LSU-rRNA)"/>
    <property type="evidence" value="ECO:0007669"/>
    <property type="project" value="UniProtKB-UniRule"/>
</dbReference>
<dbReference type="CDD" id="cd17709">
    <property type="entry name" value="BRCT_pescadillo_like"/>
    <property type="match status" value="1"/>
</dbReference>
<dbReference type="FunFam" id="3.40.50.10190:FF:000108">
    <property type="entry name" value="Pescadillo homolog"/>
    <property type="match status" value="1"/>
</dbReference>
<dbReference type="Gene3D" id="3.40.50.10190">
    <property type="entry name" value="BRCT domain"/>
    <property type="match status" value="1"/>
</dbReference>
<dbReference type="HAMAP" id="MF_03028">
    <property type="entry name" value="Pescadillo"/>
    <property type="match status" value="1"/>
</dbReference>
<dbReference type="InterPro" id="IPR001357">
    <property type="entry name" value="BRCT_dom"/>
</dbReference>
<dbReference type="InterPro" id="IPR036420">
    <property type="entry name" value="BRCT_dom_sf"/>
</dbReference>
<dbReference type="InterPro" id="IPR010613">
    <property type="entry name" value="PES"/>
</dbReference>
<dbReference type="PANTHER" id="PTHR12221">
    <property type="entry name" value="PESCADILLO - RELATED"/>
    <property type="match status" value="1"/>
</dbReference>
<dbReference type="PANTHER" id="PTHR12221:SF6">
    <property type="entry name" value="PESCADILLO HOMOLOG"/>
    <property type="match status" value="1"/>
</dbReference>
<dbReference type="Pfam" id="PF16589">
    <property type="entry name" value="BRCT_2"/>
    <property type="match status" value="1"/>
</dbReference>
<dbReference type="Pfam" id="PF06732">
    <property type="entry name" value="Pescadillo_N"/>
    <property type="match status" value="1"/>
</dbReference>
<dbReference type="SMART" id="SM00292">
    <property type="entry name" value="BRCT"/>
    <property type="match status" value="1"/>
</dbReference>
<dbReference type="SUPFAM" id="SSF52113">
    <property type="entry name" value="BRCT domain"/>
    <property type="match status" value="1"/>
</dbReference>
<dbReference type="PROSITE" id="PS50172">
    <property type="entry name" value="BRCT"/>
    <property type="match status" value="1"/>
</dbReference>
<evidence type="ECO:0000255" key="1">
    <source>
        <dbReference type="HAMAP-Rule" id="MF_03028"/>
    </source>
</evidence>
<evidence type="ECO:0000256" key="2">
    <source>
        <dbReference type="SAM" id="MobiDB-lite"/>
    </source>
</evidence>
<sequence>MAHKKQAWAKRVKKERFKKKYLTRMQATRLLQMESIQFRRLCILKGVYPRALTRSKQKQSGNEKQYYLAREIKWLVRDHIAEKMMTYRAWEKKVKRAEAMGRADDLKALQSSRVKPRHSLVATIKERYPYFIDAIRDVDDAMSMIHMYAFLSPEIKSESTIEIHHSLTSGLSEKAKEMCHRWNRYIARAHVLTKGFISIKGYYYEAIIKGERVRWLCPHEYAHRFPPGIQQYVMLSFLEFYLEMMKFVLFKLESDLARDEADRLAIEDEEGLTRANAEDFASGAALAVLDVGANQAQAKVKEAESKRSLMEEELLKVRELFRGLTFYISREVPAKHFALIINACGGRVATDYVASNITHVVVDRPALPPGWQQHDQMEYVQPQYIFDCLNARQMLPVTGYRIGEDLPPHVSPFSVSITNSAEDNAAVEQVKKDHPRIVGYVPARVHEIRKLINPSYSPVDPEGKVAQLEDEYSDEEMHVAVPEMDMEDDVSLSGDELAEARKKPGWQEEEVTEEVQRPKLSAFKVKKQREMNLMNAPTNEVVARRRQALRKAQENLRQSETPEARLQRKMSEVKRQEAVTRKMQLQVARKKAARFYKMVSGVVQGTAKKAATLEAKAKHIAEGKLHKTEDGKGLVNARLAARRQRAEAKGKKLKEKKADNPYKKLPKWVQ</sequence>
<feature type="chain" id="PRO_0000370470" description="Pescadillo homolog">
    <location>
        <begin position="1"/>
        <end position="670"/>
    </location>
</feature>
<feature type="domain" description="BRCT" evidence="1">
    <location>
        <begin position="316"/>
        <end position="402"/>
    </location>
</feature>
<feature type="region of interest" description="Disordered" evidence="2">
    <location>
        <begin position="643"/>
        <end position="670"/>
    </location>
</feature>
<feature type="coiled-coil region" evidence="1">
    <location>
        <begin position="292"/>
        <end position="321"/>
    </location>
</feature>
<feature type="compositionally biased region" description="Basic and acidic residues" evidence="2">
    <location>
        <begin position="644"/>
        <end position="662"/>
    </location>
</feature>
<reference key="1">
    <citation type="journal article" date="2007" name="Nat. Genet.">
        <title>Comparative genomic analysis of three Leishmania species that cause diverse human disease.</title>
        <authorList>
            <person name="Peacock C.S."/>
            <person name="Seeger K."/>
            <person name="Harris D."/>
            <person name="Murphy L."/>
            <person name="Ruiz J.C."/>
            <person name="Quail M.A."/>
            <person name="Peters N."/>
            <person name="Adlem E."/>
            <person name="Tivey A."/>
            <person name="Aslett M."/>
            <person name="Kerhornou A."/>
            <person name="Ivens A."/>
            <person name="Fraser A."/>
            <person name="Rajandream M.-A."/>
            <person name="Carver T."/>
            <person name="Norbertczak H."/>
            <person name="Chillingworth T."/>
            <person name="Hance Z."/>
            <person name="Jagels K."/>
            <person name="Moule S."/>
            <person name="Ormond D."/>
            <person name="Rutter S."/>
            <person name="Sqaures R."/>
            <person name="Whitehead S."/>
            <person name="Rabbinowitsch E."/>
            <person name="Arrowsmith C."/>
            <person name="White B."/>
            <person name="Thurston S."/>
            <person name="Bringaud F."/>
            <person name="Baldauf S.L."/>
            <person name="Faulconbridge A."/>
            <person name="Jeffares D."/>
            <person name="Depledge D.P."/>
            <person name="Oyola S.O."/>
            <person name="Hilley J.D."/>
            <person name="Brito L.O."/>
            <person name="Tosi L.R.O."/>
            <person name="Barrell B."/>
            <person name="Cruz A.K."/>
            <person name="Mottram J.C."/>
            <person name="Smith D.F."/>
            <person name="Berriman M."/>
        </authorList>
    </citation>
    <scope>NUCLEOTIDE SEQUENCE [LARGE SCALE GENOMIC DNA]</scope>
    <source>
        <strain>MHOM/BR/75/M2904</strain>
    </source>
</reference>
<gene>
    <name type="ORF">LbrM04_V2.0780</name>
    <name type="ORF">LbrM_04_0780</name>
</gene>
<proteinExistence type="inferred from homology"/>